<proteinExistence type="evidence at transcript level"/>
<name>RAB8A_MACFA</name>
<sequence>MAKTYDYLFKLLLIGDSGVGKTCVLFRFSEDAFNSTFISTIGIDFKIRTIELDGKRIKLQIWDTAGQERFRTITTAYYRGAMGIMLVYDITNEKSFDNIRNWIRNIEEHASADVEKMILGNKCDVNDKRQVSKERGEKLALDYGIKFMETSAKANINVENAFFTLARDIKAKMDKKLEGNSPQGSNQGVKITPDQQKRSSFFRCVLL</sequence>
<evidence type="ECO:0000250" key="1"/>
<evidence type="ECO:0000250" key="2">
    <source>
        <dbReference type="UniProtKB" id="P35280"/>
    </source>
</evidence>
<evidence type="ECO:0000250" key="3">
    <source>
        <dbReference type="UniProtKB" id="P55258"/>
    </source>
</evidence>
<evidence type="ECO:0000250" key="4">
    <source>
        <dbReference type="UniProtKB" id="P61006"/>
    </source>
</evidence>
<evidence type="ECO:0000250" key="5">
    <source>
        <dbReference type="UniProtKB" id="P61007"/>
    </source>
</evidence>
<evidence type="ECO:0000250" key="6">
    <source>
        <dbReference type="UniProtKB" id="P62820"/>
    </source>
</evidence>
<evidence type="ECO:0000250" key="7">
    <source>
        <dbReference type="UniProtKB" id="Q92930"/>
    </source>
</evidence>
<evidence type="ECO:0000255" key="8"/>
<evidence type="ECO:0000305" key="9"/>
<gene>
    <name type="primary">RAB8A</name>
    <name type="ORF">QccE-11745</name>
</gene>
<organism>
    <name type="scientific">Macaca fascicularis</name>
    <name type="common">Crab-eating macaque</name>
    <name type="synonym">Cynomolgus monkey</name>
    <dbReference type="NCBI Taxonomy" id="9541"/>
    <lineage>
        <taxon>Eukaryota</taxon>
        <taxon>Metazoa</taxon>
        <taxon>Chordata</taxon>
        <taxon>Craniata</taxon>
        <taxon>Vertebrata</taxon>
        <taxon>Euteleostomi</taxon>
        <taxon>Mammalia</taxon>
        <taxon>Eutheria</taxon>
        <taxon>Euarchontoglires</taxon>
        <taxon>Primates</taxon>
        <taxon>Haplorrhini</taxon>
        <taxon>Catarrhini</taxon>
        <taxon>Cercopithecidae</taxon>
        <taxon>Cercopithecinae</taxon>
        <taxon>Macaca</taxon>
    </lineage>
</organism>
<comment type="function">
    <text evidence="2 3 4">The small GTPases Rab are key regulators of intracellular membrane trafficking, from the formation of transport vesicles to their fusion with membranes. Rabs cycle between an inactive GDP-bound form and an active GTP-bound form that is able to recruit to membranes different sets of downstream effectors directly responsible for vesicle formation, movement, tethering and fusion. RAB8A is involved in polarized vesicular trafficking and neurotransmitter release. Together with RAB11A, RAB3IP, the exocyst complex, PARD3, PRKCI, ANXA2, CDC42 and DNMBP promotes transcytosis of PODXL to the apical membrane initiation sites (AMIS), apical surface formation and lumenogenesis. Regulates the compacted morphology of the Golgi. Together with MYO5B and RAB11A participates in epithelial cell polarization. Also involved in membrane trafficking to the cilium and ciliogenesis (By similarity). Together with MICALL2, may also regulate adherens junction assembly (By similarity). May play a role in insulin-induced transport to the plasma membrane of the glucose transporter GLUT4 and therefore play a role in glucose homeostasis (By similarity). Involved in autophagy. Participates in the export of a subset of neosynthesized proteins through a Rab8-Rab10-Rab11-dependent endososomal export route. Targeted to and stabilized on stressed lysosomes through LRRK2 phosphorylation. Suppresses stress-induced lysosomal enlargement through EHBP1 and EHNP1L1 effector proteins (By similarity).</text>
</comment>
<comment type="catalytic activity">
    <reaction evidence="4">
        <text>GTP + H2O = GDP + phosphate + H(+)</text>
        <dbReference type="Rhea" id="RHEA:19669"/>
        <dbReference type="ChEBI" id="CHEBI:15377"/>
        <dbReference type="ChEBI" id="CHEBI:15378"/>
        <dbReference type="ChEBI" id="CHEBI:37565"/>
        <dbReference type="ChEBI" id="CHEBI:43474"/>
        <dbReference type="ChEBI" id="CHEBI:58189"/>
        <dbReference type="EC" id="3.6.5.2"/>
    </reaction>
    <physiologicalReaction direction="left-to-right" evidence="4">
        <dbReference type="Rhea" id="RHEA:19670"/>
    </physiologicalReaction>
</comment>
<comment type="cofactor">
    <cofactor evidence="4">
        <name>Mg(2+)</name>
        <dbReference type="ChEBI" id="CHEBI:18420"/>
    </cofactor>
</comment>
<comment type="activity regulation">
    <text evidence="2 4">Regulated by guanine nucleotide exchange factors (GEFs) such as RAB3IP/Rabin8 and RPGR which promote the exchange of bound GDP for free GTP, GTPase activating proteins (GAPs) which increase the GTP hydrolysis activity, and GDP dissociation inhibitors (GDIs) which inhibit the dissociation of the nucleotide from the GTPase (By similarity). Activated in response to insulin (By similarity).</text>
</comment>
<comment type="subunit">
    <text evidence="3 4">Interacts (GTP-bound form) with MICALL1; regulates RAB8A association with recycling endosomes (By similarity). Interacts with MICALL2; competes with RAB13 and is involved in E-cadherin endocytic recycling (By similarity). Interacts (GTP-bound form) with MICAL1, MICALCL, MICAL3, EHBP1 and EHBP1L1; at least in case of MICAL1, MICALCL, MICAL3 and EHBP1L1 two molecules of RAB8A can bind to one molecule of the effector protein; ternary complexes of RAB8A, RAB13 and either MICAL1 or EHBP1L1 are possible. Interacts with EHD1 (By similarity). Interacts with MAP4K2 and SYTL4 (By similarity). Interacts with SGSM1 and SGSM3 (By similarity). Interacts with RABIF, RIMS2, RPH3A and RPH3A (By similarity). Interacts with OPTN. Interacts with RAB3IP, RAB3IP functions as guanine exchange factor (GEF). Interacts with MYO5B. Interacts with CIMAP3. Interacts with BIRC6/bruce. Interacts with OCRL (By similarity). Interacts with AHI1 (By similarity). Interacts with DCDC1. Interacts with LRRK2; interaction facilitates phosphorylation of Thr-72. Interacts with RAB31P, GDI1, GDI2, CHM, CHML, RABGGTA, RABGGTB, TBC1D15 and INPP5B; these interactions are dependent on Thr-72 not being phosphorylated. Interacts with RILPL1 and RILPL2; these interactions are dependent on the phosphorylation of Thr-72 by LRRK2. Interacts with DZIP1; prevents inhibition by the GDP-dissociation inhibitor GDI2. Interacts (in GDP-bound form) with RAB3IP/Rabin8, RAB3IP functions as guanine exchange factor (GEF) towards RAB8A (By similarity). Interacts (in GDP-bound form) with RPGR, RPGR functions as GEF towards RAB8A (By similarity).</text>
</comment>
<comment type="subcellular location">
    <subcellularLocation>
        <location evidence="3">Cell membrane</location>
        <topology evidence="3">Lipid-anchor</topology>
        <orientation evidence="3">Cytoplasmic side</orientation>
    </subcellularLocation>
    <subcellularLocation>
        <location evidence="4">Golgi apparatus</location>
    </subcellularLocation>
    <subcellularLocation>
        <location evidence="4">Endosome membrane</location>
    </subcellularLocation>
    <subcellularLocation>
        <location evidence="4">Recycling endosome membrane</location>
    </subcellularLocation>
    <subcellularLocation>
        <location evidence="4">Cell projection</location>
        <location evidence="4">Cilium</location>
    </subcellularLocation>
    <subcellularLocation>
        <location evidence="4 7">Cytoplasmic vesicle</location>
        <location evidence="4 7">Phagosome membrane</location>
        <topology evidence="7">Lipid-anchor</topology>
        <orientation evidence="7">Cytoplasmic side</orientation>
    </subcellularLocation>
    <subcellularLocation>
        <location evidence="3">Cytoplasm</location>
        <location evidence="3">Cytoskeleton</location>
        <location evidence="3">Microtubule organizing center</location>
        <location evidence="3">Centrosome</location>
        <location evidence="3">Centriole</location>
    </subcellularLocation>
    <subcellularLocation>
        <location evidence="3">Cytoplasm</location>
        <location evidence="3">Cytoskeleton</location>
        <location evidence="3">Cilium basal body</location>
    </subcellularLocation>
    <subcellularLocation>
        <location evidence="4">Midbody</location>
    </subcellularLocation>
    <subcellularLocation>
        <location evidence="4">Cytoplasm</location>
    </subcellularLocation>
    <subcellularLocation>
        <location evidence="4">Lysosome</location>
    </subcellularLocation>
    <text evidence="4 5">Colocalizes with OPTN at the Golgi complex and in vesicular structures close to the plasma membrane. In the GDP-bound form, present in the perinuclear region. Shows a polarized distribution to distal regions of cell protrusions in the GTP-bound form. Colocalizes with PARD3, PRKCI, EXOC5, OCLN, PODXL and RAB11A in apical membrane initiation sites (AMIS) during the generation of apical surface and lumenogenesis. Localizes to tubular recycling endosome. Recruited to phagosomes containing S.aureus or Mycobacterium (By similarity). Non-phosphorylated RAB8A predominantly localizes to the cytoplasm whereas phosphorylated RAB8A localizes to the membrane (By similarity). Localizes to enlarged lysosomes through LRRK2 phosphorylation (By similarity). Colocalizes with RPGR at the primary cilia of epithelial cells (By similarity).</text>
</comment>
<comment type="domain">
    <text evidence="6">Switch 1, switch 2 and the interswitch regions are characteristic of Rab GTPases and mediate the interactions with Rab downstream effectors. The switch regions undergo conformational changes upon nucleotide binding which drives interaction with specific sets of effector proteins, with most effectors only binding to GTP-bound Rab.</text>
</comment>
<comment type="PTM">
    <text evidence="4">Phosphorylation of Thr-72 in the switch II region by LRRK2 prevents the association of RAB regulatory proteins, including CHM, CHML and RAB GDP dissociation inhibitors GDI1 and GDI2 (By similarity). Phosphorylation by LRRK2 is required for localization to stressed lysosomes (By similarity).</text>
</comment>
<comment type="similarity">
    <text evidence="9">Belongs to the small GTPase superfamily. Rab family.</text>
</comment>
<reference key="1">
    <citation type="submission" date="2005-06" db="EMBL/GenBank/DDBJ databases">
        <title>DNA sequences of macaque genes expressed in brain or testis and its evolutionary implications.</title>
        <authorList>
            <consortium name="International consortium for macaque cDNA sequencing and analysis"/>
        </authorList>
    </citation>
    <scope>NUCLEOTIDE SEQUENCE [LARGE SCALE MRNA]</scope>
    <source>
        <tissue>Brain cortex</tissue>
    </source>
</reference>
<protein>
    <recommendedName>
        <fullName>Ras-related protein Rab-8A</fullName>
        <ecNumber evidence="4">3.6.5.2</ecNumber>
    </recommendedName>
</protein>
<accession>Q4R5P1</accession>
<feature type="chain" id="PRO_0000121131" description="Ras-related protein Rab-8A">
    <location>
        <begin position="1"/>
        <end position="204"/>
    </location>
</feature>
<feature type="propeptide" id="PRO_0000370794" description="Removed in mature form" evidence="8">
    <location>
        <begin position="205"/>
        <end position="207"/>
    </location>
</feature>
<feature type="short sequence motif" description="Switch 1" evidence="6">
    <location>
        <begin position="31"/>
        <end position="45"/>
    </location>
</feature>
<feature type="short sequence motif" description="Switch 2" evidence="6">
    <location>
        <begin position="63"/>
        <end position="80"/>
    </location>
</feature>
<feature type="binding site" evidence="4">
    <location>
        <position position="17"/>
    </location>
    <ligand>
        <name>GTP</name>
        <dbReference type="ChEBI" id="CHEBI:37565"/>
    </ligand>
</feature>
<feature type="binding site" evidence="4">
    <location>
        <position position="18"/>
    </location>
    <ligand>
        <name>GTP</name>
        <dbReference type="ChEBI" id="CHEBI:37565"/>
    </ligand>
</feature>
<feature type="binding site" evidence="4">
    <location>
        <position position="19"/>
    </location>
    <ligand>
        <name>GTP</name>
        <dbReference type="ChEBI" id="CHEBI:37565"/>
    </ligand>
</feature>
<feature type="binding site" evidence="4">
    <location>
        <position position="20"/>
    </location>
    <ligand>
        <name>GTP</name>
        <dbReference type="ChEBI" id="CHEBI:37565"/>
    </ligand>
</feature>
<feature type="binding site" evidence="4">
    <location>
        <position position="21"/>
    </location>
    <ligand>
        <name>GTP</name>
        <dbReference type="ChEBI" id="CHEBI:37565"/>
    </ligand>
</feature>
<feature type="binding site" evidence="4">
    <location>
        <position position="22"/>
    </location>
    <ligand>
        <name>GTP</name>
        <dbReference type="ChEBI" id="CHEBI:37565"/>
    </ligand>
</feature>
<feature type="binding site" evidence="4">
    <location>
        <position position="22"/>
    </location>
    <ligand>
        <name>Mg(2+)</name>
        <dbReference type="ChEBI" id="CHEBI:18420"/>
    </ligand>
</feature>
<feature type="binding site" evidence="4">
    <location>
        <position position="23"/>
    </location>
    <ligand>
        <name>GTP</name>
        <dbReference type="ChEBI" id="CHEBI:37565"/>
    </ligand>
</feature>
<feature type="binding site" evidence="4">
    <location>
        <position position="35"/>
    </location>
    <ligand>
        <name>GTP</name>
        <dbReference type="ChEBI" id="CHEBI:37565"/>
    </ligand>
</feature>
<feature type="binding site" evidence="4">
    <location>
        <position position="39"/>
    </location>
    <ligand>
        <name>GTP</name>
        <dbReference type="ChEBI" id="CHEBI:37565"/>
    </ligand>
</feature>
<feature type="binding site" evidence="4">
    <location>
        <position position="40"/>
    </location>
    <ligand>
        <name>GTP</name>
        <dbReference type="ChEBI" id="CHEBI:37565"/>
    </ligand>
</feature>
<feature type="binding site" evidence="4">
    <location>
        <position position="40"/>
    </location>
    <ligand>
        <name>Mg(2+)</name>
        <dbReference type="ChEBI" id="CHEBI:18420"/>
    </ligand>
</feature>
<feature type="binding site" evidence="4">
    <location>
        <position position="63"/>
    </location>
    <ligand>
        <name>Mg(2+)</name>
        <dbReference type="ChEBI" id="CHEBI:18420"/>
    </ligand>
</feature>
<feature type="binding site" evidence="4">
    <location>
        <position position="66"/>
    </location>
    <ligand>
        <name>GTP</name>
        <dbReference type="ChEBI" id="CHEBI:37565"/>
    </ligand>
</feature>
<feature type="binding site" evidence="4">
    <location>
        <position position="121"/>
    </location>
    <ligand>
        <name>GTP</name>
        <dbReference type="ChEBI" id="CHEBI:37565"/>
    </ligand>
</feature>
<feature type="binding site" evidence="4">
    <location>
        <position position="122"/>
    </location>
    <ligand>
        <name>GTP</name>
        <dbReference type="ChEBI" id="CHEBI:37565"/>
    </ligand>
</feature>
<feature type="binding site" evidence="4">
    <location>
        <position position="124"/>
    </location>
    <ligand>
        <name>GTP</name>
        <dbReference type="ChEBI" id="CHEBI:37565"/>
    </ligand>
</feature>
<feature type="binding site" evidence="4">
    <location>
        <position position="152"/>
    </location>
    <ligand>
        <name>GTP</name>
        <dbReference type="ChEBI" id="CHEBI:37565"/>
    </ligand>
</feature>
<feature type="binding site" evidence="4">
    <location>
        <position position="153"/>
    </location>
    <ligand>
        <name>GTP</name>
        <dbReference type="ChEBI" id="CHEBI:37565"/>
    </ligand>
</feature>
<feature type="modified residue" description="Phosphothreonine" evidence="4">
    <location>
        <position position="72"/>
    </location>
</feature>
<feature type="modified residue" description="Phosphoserine" evidence="4">
    <location>
        <position position="181"/>
    </location>
</feature>
<feature type="modified residue" description="Phosphoserine" evidence="4">
    <location>
        <position position="185"/>
    </location>
</feature>
<feature type="modified residue" description="Cysteine methyl ester" evidence="8">
    <location>
        <position position="204"/>
    </location>
</feature>
<feature type="lipid moiety-binding region" description="S-geranylgeranyl cysteine" evidence="1">
    <location>
        <position position="204"/>
    </location>
</feature>
<keyword id="KW-0072">Autophagy</keyword>
<keyword id="KW-1003">Cell membrane</keyword>
<keyword id="KW-0966">Cell projection</keyword>
<keyword id="KW-0969">Cilium</keyword>
<keyword id="KW-0970">Cilium biogenesis/degradation</keyword>
<keyword id="KW-0963">Cytoplasm</keyword>
<keyword id="KW-0968">Cytoplasmic vesicle</keyword>
<keyword id="KW-0206">Cytoskeleton</keyword>
<keyword id="KW-0967">Endosome</keyword>
<keyword id="KW-0333">Golgi apparatus</keyword>
<keyword id="KW-0342">GTP-binding</keyword>
<keyword id="KW-0378">Hydrolase</keyword>
<keyword id="KW-0449">Lipoprotein</keyword>
<keyword id="KW-0458">Lysosome</keyword>
<keyword id="KW-0460">Magnesium</keyword>
<keyword id="KW-0472">Membrane</keyword>
<keyword id="KW-0479">Metal-binding</keyword>
<keyword id="KW-0488">Methylation</keyword>
<keyword id="KW-0547">Nucleotide-binding</keyword>
<keyword id="KW-0597">Phosphoprotein</keyword>
<keyword id="KW-0636">Prenylation</keyword>
<keyword id="KW-0653">Protein transport</keyword>
<keyword id="KW-1185">Reference proteome</keyword>
<keyword id="KW-0813">Transport</keyword>
<dbReference type="EC" id="3.6.5.2" evidence="4"/>
<dbReference type="EMBL" id="AB169502">
    <property type="protein sequence ID" value="BAE01584.1"/>
    <property type="molecule type" value="mRNA"/>
</dbReference>
<dbReference type="RefSeq" id="XP_015295653.1">
    <property type="nucleotide sequence ID" value="XM_015440167.3"/>
</dbReference>
<dbReference type="SMR" id="Q4R5P1"/>
<dbReference type="STRING" id="9541.ENSMFAP00000021535"/>
<dbReference type="GeneID" id="102139595"/>
<dbReference type="KEGG" id="mcf:102139595"/>
<dbReference type="CTD" id="4218"/>
<dbReference type="VEuPathDB" id="HostDB:ENSMFAG00000035674"/>
<dbReference type="eggNOG" id="KOG0078">
    <property type="taxonomic scope" value="Eukaryota"/>
</dbReference>
<dbReference type="OMA" id="SKMEQNE"/>
<dbReference type="OrthoDB" id="1744at314294"/>
<dbReference type="Proteomes" id="UP000233100">
    <property type="component" value="Chromosome 19"/>
</dbReference>
<dbReference type="GO" id="GO:0005814">
    <property type="term" value="C:centriole"/>
    <property type="evidence" value="ECO:0007669"/>
    <property type="project" value="UniProtKB-SubCell"/>
</dbReference>
<dbReference type="GO" id="GO:0005813">
    <property type="term" value="C:centrosome"/>
    <property type="evidence" value="ECO:0000250"/>
    <property type="project" value="UniProtKB"/>
</dbReference>
<dbReference type="GO" id="GO:0036064">
    <property type="term" value="C:ciliary basal body"/>
    <property type="evidence" value="ECO:0000250"/>
    <property type="project" value="UniProtKB"/>
</dbReference>
<dbReference type="GO" id="GO:0005929">
    <property type="term" value="C:cilium"/>
    <property type="evidence" value="ECO:0000250"/>
    <property type="project" value="UniProtKB"/>
</dbReference>
<dbReference type="GO" id="GO:0010008">
    <property type="term" value="C:endosome membrane"/>
    <property type="evidence" value="ECO:0000250"/>
    <property type="project" value="UniProtKB"/>
</dbReference>
<dbReference type="GO" id="GO:0005794">
    <property type="term" value="C:Golgi apparatus"/>
    <property type="evidence" value="ECO:0007669"/>
    <property type="project" value="UniProtKB-SubCell"/>
</dbReference>
<dbReference type="GO" id="GO:0005764">
    <property type="term" value="C:lysosome"/>
    <property type="evidence" value="ECO:0007669"/>
    <property type="project" value="UniProtKB-SubCell"/>
</dbReference>
<dbReference type="GO" id="GO:0030496">
    <property type="term" value="C:midbody"/>
    <property type="evidence" value="ECO:0000250"/>
    <property type="project" value="UniProtKB"/>
</dbReference>
<dbReference type="GO" id="GO:0045335">
    <property type="term" value="C:phagocytic vesicle"/>
    <property type="evidence" value="ECO:0000250"/>
    <property type="project" value="UniProtKB"/>
</dbReference>
<dbReference type="GO" id="GO:0030670">
    <property type="term" value="C:phagocytic vesicle membrane"/>
    <property type="evidence" value="ECO:0007669"/>
    <property type="project" value="UniProtKB-SubCell"/>
</dbReference>
<dbReference type="GO" id="GO:0005886">
    <property type="term" value="C:plasma membrane"/>
    <property type="evidence" value="ECO:0007669"/>
    <property type="project" value="UniProtKB-SubCell"/>
</dbReference>
<dbReference type="GO" id="GO:0055038">
    <property type="term" value="C:recycling endosome membrane"/>
    <property type="evidence" value="ECO:0000250"/>
    <property type="project" value="UniProtKB"/>
</dbReference>
<dbReference type="GO" id="GO:0019003">
    <property type="term" value="F:GDP binding"/>
    <property type="evidence" value="ECO:0000250"/>
    <property type="project" value="UniProtKB"/>
</dbReference>
<dbReference type="GO" id="GO:0005525">
    <property type="term" value="F:GTP binding"/>
    <property type="evidence" value="ECO:0000250"/>
    <property type="project" value="UniProtKB"/>
</dbReference>
<dbReference type="GO" id="GO:0003924">
    <property type="term" value="F:GTPase activity"/>
    <property type="evidence" value="ECO:0007669"/>
    <property type="project" value="InterPro"/>
</dbReference>
<dbReference type="GO" id="GO:0031267">
    <property type="term" value="F:small GTPase binding"/>
    <property type="evidence" value="ECO:0000250"/>
    <property type="project" value="UniProtKB"/>
</dbReference>
<dbReference type="GO" id="GO:0006914">
    <property type="term" value="P:autophagy"/>
    <property type="evidence" value="ECO:0007669"/>
    <property type="project" value="UniProtKB-KW"/>
</dbReference>
<dbReference type="GO" id="GO:0007409">
    <property type="term" value="P:axonogenesis"/>
    <property type="evidence" value="ECO:0000250"/>
    <property type="project" value="UniProtKB"/>
</dbReference>
<dbReference type="GO" id="GO:0032869">
    <property type="term" value="P:cellular response to insulin stimulus"/>
    <property type="evidence" value="ECO:0000250"/>
    <property type="project" value="UniProtKB"/>
</dbReference>
<dbReference type="GO" id="GO:0060271">
    <property type="term" value="P:cilium assembly"/>
    <property type="evidence" value="ECO:0000250"/>
    <property type="project" value="UniProtKB"/>
</dbReference>
<dbReference type="GO" id="GO:0007030">
    <property type="term" value="P:Golgi organization"/>
    <property type="evidence" value="ECO:0000250"/>
    <property type="project" value="UniProtKB"/>
</dbReference>
<dbReference type="GO" id="GO:0061512">
    <property type="term" value="P:protein localization to cilium"/>
    <property type="evidence" value="ECO:0000250"/>
    <property type="project" value="UniProtKB"/>
</dbReference>
<dbReference type="GO" id="GO:0072659">
    <property type="term" value="P:protein localization to plasma membrane"/>
    <property type="evidence" value="ECO:0000250"/>
    <property type="project" value="UniProtKB"/>
</dbReference>
<dbReference type="GO" id="GO:0015031">
    <property type="term" value="P:protein transport"/>
    <property type="evidence" value="ECO:0007669"/>
    <property type="project" value="UniProtKB-KW"/>
</dbReference>
<dbReference type="GO" id="GO:0010506">
    <property type="term" value="P:regulation of autophagy"/>
    <property type="evidence" value="ECO:0000250"/>
    <property type="project" value="UniProtKB"/>
</dbReference>
<dbReference type="CDD" id="cd01867">
    <property type="entry name" value="Rab8_Rab10_Rab13_like"/>
    <property type="match status" value="1"/>
</dbReference>
<dbReference type="FunFam" id="3.40.50.300:FF:000202">
    <property type="entry name" value="ras-related protein Rab-8A"/>
    <property type="match status" value="1"/>
</dbReference>
<dbReference type="Gene3D" id="3.40.50.300">
    <property type="entry name" value="P-loop containing nucleotide triphosphate hydrolases"/>
    <property type="match status" value="1"/>
</dbReference>
<dbReference type="InterPro" id="IPR027417">
    <property type="entry name" value="P-loop_NTPase"/>
</dbReference>
<dbReference type="InterPro" id="IPR005225">
    <property type="entry name" value="Small_GTP-bd"/>
</dbReference>
<dbReference type="InterPro" id="IPR001806">
    <property type="entry name" value="Small_GTPase"/>
</dbReference>
<dbReference type="InterPro" id="IPR050305">
    <property type="entry name" value="Small_GTPase_Rab"/>
</dbReference>
<dbReference type="NCBIfam" id="TIGR00231">
    <property type="entry name" value="small_GTP"/>
    <property type="match status" value="1"/>
</dbReference>
<dbReference type="PANTHER" id="PTHR47980">
    <property type="entry name" value="LD44762P"/>
    <property type="match status" value="1"/>
</dbReference>
<dbReference type="Pfam" id="PF00071">
    <property type="entry name" value="Ras"/>
    <property type="match status" value="1"/>
</dbReference>
<dbReference type="PRINTS" id="PR00449">
    <property type="entry name" value="RASTRNSFRMNG"/>
</dbReference>
<dbReference type="SMART" id="SM00177">
    <property type="entry name" value="ARF"/>
    <property type="match status" value="1"/>
</dbReference>
<dbReference type="SMART" id="SM00175">
    <property type="entry name" value="RAB"/>
    <property type="match status" value="1"/>
</dbReference>
<dbReference type="SMART" id="SM00176">
    <property type="entry name" value="RAN"/>
    <property type="match status" value="1"/>
</dbReference>
<dbReference type="SMART" id="SM00173">
    <property type="entry name" value="RAS"/>
    <property type="match status" value="1"/>
</dbReference>
<dbReference type="SMART" id="SM00174">
    <property type="entry name" value="RHO"/>
    <property type="match status" value="1"/>
</dbReference>
<dbReference type="SUPFAM" id="SSF52540">
    <property type="entry name" value="P-loop containing nucleoside triphosphate hydrolases"/>
    <property type="match status" value="1"/>
</dbReference>
<dbReference type="PROSITE" id="PS51419">
    <property type="entry name" value="RAB"/>
    <property type="match status" value="1"/>
</dbReference>